<protein>
    <recommendedName>
        <fullName evidence="1">Malonyl-[acyl-carrier protein] O-methyltransferase</fullName>
        <shortName evidence="1">Malonyl-ACP O-methyltransferase</shortName>
        <ecNumber evidence="1">2.1.1.197</ecNumber>
    </recommendedName>
    <alternativeName>
        <fullName evidence="1">Biotin synthesis protein BioC</fullName>
    </alternativeName>
</protein>
<accession>E4TI44</accession>
<evidence type="ECO:0000255" key="1">
    <source>
        <dbReference type="HAMAP-Rule" id="MF_00835"/>
    </source>
</evidence>
<sequence>MLTSKNNFHKVAPFYEQNALIQKKMAERLMELVEKNVGCEFDDVLEIGCGTGLFTKLIQKKINYNRLFLNDLHNFISFEGGYDFLEGDIEEINLSDKFDIIFSNATFQWVKDFEQLIQKLYQSLKPQGYLCFTTFGEENLKEVKRITNVGLNYLTFNEYLDFLGRYFKIVAHYHTKECLYFQSPVDVLKHMKLTGVNSVEKVQWTKRDFVNFCESYEQFKTEEGYLLTYHPFYFIVSKNKEVCYD</sequence>
<proteinExistence type="inferred from homology"/>
<name>BIOC_CALNY</name>
<reference key="1">
    <citation type="journal article" date="2011" name="Stand. Genomic Sci.">
        <title>Complete genome sequence of Calditerrivibrio nitroreducens type strain (Yu37-1).</title>
        <authorList>
            <person name="Pitluck S."/>
            <person name="Sikorski J."/>
            <person name="Zeytun A."/>
            <person name="Lapidus A."/>
            <person name="Nolan M."/>
            <person name="Lucas S."/>
            <person name="Hammon N."/>
            <person name="Deshpande S."/>
            <person name="Cheng J.F."/>
            <person name="Tapia R."/>
            <person name="Han C."/>
            <person name="Goodwin L."/>
            <person name="Liolios K."/>
            <person name="Pagani I."/>
            <person name="Ivanova N."/>
            <person name="Mavromatis K."/>
            <person name="Pati A."/>
            <person name="Chen A."/>
            <person name="Palaniappan K."/>
            <person name="Hauser L."/>
            <person name="Chang Y.J."/>
            <person name="Jeffries C.D."/>
            <person name="Detter J.C."/>
            <person name="Brambilla E."/>
            <person name="Djao O.D."/>
            <person name="Rohde M."/>
            <person name="Spring S."/>
            <person name="Goker M."/>
            <person name="Woyke T."/>
            <person name="Bristow J."/>
            <person name="Eisen J.A."/>
            <person name="Markowitz V."/>
            <person name="Hugenholtz P."/>
            <person name="Kyrpides N.C."/>
            <person name="Klenk H.P."/>
            <person name="Land M."/>
        </authorList>
    </citation>
    <scope>NUCLEOTIDE SEQUENCE [LARGE SCALE GENOMIC DNA]</scope>
    <source>
        <strain>DSM 19672 / NBRC 101217 / Yu37-1</strain>
    </source>
</reference>
<organism>
    <name type="scientific">Calditerrivibrio nitroreducens (strain DSM 19672 / NBRC 101217 / Yu37-1)</name>
    <dbReference type="NCBI Taxonomy" id="768670"/>
    <lineage>
        <taxon>Bacteria</taxon>
        <taxon>Pseudomonadati</taxon>
        <taxon>Deferribacterota</taxon>
        <taxon>Deferribacteres</taxon>
        <taxon>Deferribacterales</taxon>
        <taxon>Calditerrivibrionaceae</taxon>
    </lineage>
</organism>
<comment type="function">
    <text evidence="1">Converts the free carboxyl group of a malonyl-thioester to its methyl ester by transfer of a methyl group from S-adenosyl-L-methionine (SAM). It allows to synthesize pimeloyl-ACP via the fatty acid synthetic pathway.</text>
</comment>
<comment type="catalytic activity">
    <reaction evidence="1">
        <text>malonyl-[ACP] + S-adenosyl-L-methionine = malonyl-[ACP] methyl ester + S-adenosyl-L-homocysteine</text>
        <dbReference type="Rhea" id="RHEA:17105"/>
        <dbReference type="Rhea" id="RHEA-COMP:9623"/>
        <dbReference type="Rhea" id="RHEA-COMP:9954"/>
        <dbReference type="ChEBI" id="CHEBI:57856"/>
        <dbReference type="ChEBI" id="CHEBI:59789"/>
        <dbReference type="ChEBI" id="CHEBI:78449"/>
        <dbReference type="ChEBI" id="CHEBI:78845"/>
        <dbReference type="EC" id="2.1.1.197"/>
    </reaction>
</comment>
<comment type="pathway">
    <text evidence="1">Cofactor biosynthesis; biotin biosynthesis.</text>
</comment>
<comment type="similarity">
    <text evidence="1">Belongs to the methyltransferase superfamily.</text>
</comment>
<keyword id="KW-0093">Biotin biosynthesis</keyword>
<keyword id="KW-0489">Methyltransferase</keyword>
<keyword id="KW-1185">Reference proteome</keyword>
<keyword id="KW-0949">S-adenosyl-L-methionine</keyword>
<keyword id="KW-0808">Transferase</keyword>
<dbReference type="EC" id="2.1.1.197" evidence="1"/>
<dbReference type="EMBL" id="CP002347">
    <property type="protein sequence ID" value="ADR18960.1"/>
    <property type="molecule type" value="Genomic_DNA"/>
</dbReference>
<dbReference type="RefSeq" id="WP_013451173.1">
    <property type="nucleotide sequence ID" value="NC_014758.1"/>
</dbReference>
<dbReference type="SMR" id="E4TI44"/>
<dbReference type="STRING" id="768670.Calni_1049"/>
<dbReference type="KEGG" id="cni:Calni_1049"/>
<dbReference type="eggNOG" id="COG4106">
    <property type="taxonomic scope" value="Bacteria"/>
</dbReference>
<dbReference type="HOGENOM" id="CLU_046586_1_0_0"/>
<dbReference type="OrthoDB" id="9760689at2"/>
<dbReference type="UniPathway" id="UPA00078"/>
<dbReference type="Proteomes" id="UP000007039">
    <property type="component" value="Chromosome"/>
</dbReference>
<dbReference type="GO" id="GO:0010340">
    <property type="term" value="F:carboxyl-O-methyltransferase activity"/>
    <property type="evidence" value="ECO:0007669"/>
    <property type="project" value="UniProtKB-UniRule"/>
</dbReference>
<dbReference type="GO" id="GO:0102130">
    <property type="term" value="F:malonyl-CoA methyltransferase activity"/>
    <property type="evidence" value="ECO:0007669"/>
    <property type="project" value="UniProtKB-EC"/>
</dbReference>
<dbReference type="GO" id="GO:0008757">
    <property type="term" value="F:S-adenosylmethionine-dependent methyltransferase activity"/>
    <property type="evidence" value="ECO:0007669"/>
    <property type="project" value="InterPro"/>
</dbReference>
<dbReference type="GO" id="GO:0009102">
    <property type="term" value="P:biotin biosynthetic process"/>
    <property type="evidence" value="ECO:0007669"/>
    <property type="project" value="UniProtKB-UniRule"/>
</dbReference>
<dbReference type="GO" id="GO:0032259">
    <property type="term" value="P:methylation"/>
    <property type="evidence" value="ECO:0007669"/>
    <property type="project" value="UniProtKB-KW"/>
</dbReference>
<dbReference type="CDD" id="cd02440">
    <property type="entry name" value="AdoMet_MTases"/>
    <property type="match status" value="1"/>
</dbReference>
<dbReference type="Gene3D" id="3.40.50.150">
    <property type="entry name" value="Vaccinia Virus protein VP39"/>
    <property type="match status" value="1"/>
</dbReference>
<dbReference type="HAMAP" id="MF_00835">
    <property type="entry name" value="BioC"/>
    <property type="match status" value="1"/>
</dbReference>
<dbReference type="InterPro" id="IPR011814">
    <property type="entry name" value="BioC"/>
</dbReference>
<dbReference type="InterPro" id="IPR013216">
    <property type="entry name" value="Methyltransf_11"/>
</dbReference>
<dbReference type="InterPro" id="IPR029063">
    <property type="entry name" value="SAM-dependent_MTases_sf"/>
</dbReference>
<dbReference type="NCBIfam" id="TIGR02072">
    <property type="entry name" value="BioC"/>
    <property type="match status" value="1"/>
</dbReference>
<dbReference type="PANTHER" id="PTHR43861">
    <property type="entry name" value="TRANS-ACONITATE 2-METHYLTRANSFERASE-RELATED"/>
    <property type="match status" value="1"/>
</dbReference>
<dbReference type="Pfam" id="PF08241">
    <property type="entry name" value="Methyltransf_11"/>
    <property type="match status" value="1"/>
</dbReference>
<dbReference type="SUPFAM" id="SSF53335">
    <property type="entry name" value="S-adenosyl-L-methionine-dependent methyltransferases"/>
    <property type="match status" value="1"/>
</dbReference>
<feature type="chain" id="PRO_0000412488" description="Malonyl-[acyl-carrier protein] O-methyltransferase">
    <location>
        <begin position="1"/>
        <end position="245"/>
    </location>
</feature>
<gene>
    <name evidence="1" type="primary">bioC</name>
    <name type="ordered locus">Calni_1049</name>
</gene>